<reference key="1">
    <citation type="journal article" date="2007" name="Mol. Phylogenet. Evol.">
        <title>Phylogenetic and evolutionary implications of complete chloroplast genome sequences of four early-diverging angiosperms: Buxus (Buxaceae), Chloranthus (Chloranthaceae), Dioscorea (Dioscoreaceae), and Illicium (Schisandraceae).</title>
        <authorList>
            <person name="Hansen D.R."/>
            <person name="Dastidar S.G."/>
            <person name="Cai Z."/>
            <person name="Penaflor C."/>
            <person name="Kuehl J.V."/>
            <person name="Boore J.L."/>
            <person name="Jansen R.K."/>
        </authorList>
    </citation>
    <scope>NUCLEOTIDE SEQUENCE [LARGE SCALE GENOMIC DNA]</scope>
</reference>
<dbReference type="EC" id="2.7.7.6" evidence="1"/>
<dbReference type="EMBL" id="EF380353">
    <property type="protein sequence ID" value="ABR01421.1"/>
    <property type="molecule type" value="Genomic_DNA"/>
</dbReference>
<dbReference type="RefSeq" id="YP_001294343.1">
    <property type="nucleotide sequence ID" value="NC_009601.1"/>
</dbReference>
<dbReference type="SMR" id="A6MMJ8"/>
<dbReference type="GeneID" id="5236566"/>
<dbReference type="GO" id="GO:0009507">
    <property type="term" value="C:chloroplast"/>
    <property type="evidence" value="ECO:0007669"/>
    <property type="project" value="UniProtKB-SubCell"/>
</dbReference>
<dbReference type="GO" id="GO:0000428">
    <property type="term" value="C:DNA-directed RNA polymerase complex"/>
    <property type="evidence" value="ECO:0007669"/>
    <property type="project" value="UniProtKB-KW"/>
</dbReference>
<dbReference type="GO" id="GO:0005739">
    <property type="term" value="C:mitochondrion"/>
    <property type="evidence" value="ECO:0007669"/>
    <property type="project" value="GOC"/>
</dbReference>
<dbReference type="GO" id="GO:0003677">
    <property type="term" value="F:DNA binding"/>
    <property type="evidence" value="ECO:0007669"/>
    <property type="project" value="UniProtKB-UniRule"/>
</dbReference>
<dbReference type="GO" id="GO:0003899">
    <property type="term" value="F:DNA-directed RNA polymerase activity"/>
    <property type="evidence" value="ECO:0007669"/>
    <property type="project" value="UniProtKB-UniRule"/>
</dbReference>
<dbReference type="GO" id="GO:0000287">
    <property type="term" value="F:magnesium ion binding"/>
    <property type="evidence" value="ECO:0007669"/>
    <property type="project" value="UniProtKB-UniRule"/>
</dbReference>
<dbReference type="GO" id="GO:0008270">
    <property type="term" value="F:zinc ion binding"/>
    <property type="evidence" value="ECO:0007669"/>
    <property type="project" value="UniProtKB-UniRule"/>
</dbReference>
<dbReference type="GO" id="GO:0006351">
    <property type="term" value="P:DNA-templated transcription"/>
    <property type="evidence" value="ECO:0007669"/>
    <property type="project" value="UniProtKB-UniRule"/>
</dbReference>
<dbReference type="FunFam" id="4.10.860.120:FF:000007">
    <property type="entry name" value="DNA-directed RNA polymerase subunit gamma"/>
    <property type="match status" value="1"/>
</dbReference>
<dbReference type="Gene3D" id="1.10.40.90">
    <property type="match status" value="1"/>
</dbReference>
<dbReference type="Gene3D" id="2.40.40.20">
    <property type="match status" value="1"/>
</dbReference>
<dbReference type="Gene3D" id="4.10.860.120">
    <property type="entry name" value="RNA polymerase II, clamp domain"/>
    <property type="match status" value="1"/>
</dbReference>
<dbReference type="Gene3D" id="1.10.274.100">
    <property type="entry name" value="RNA polymerase Rpb1, domain 3"/>
    <property type="match status" value="1"/>
</dbReference>
<dbReference type="HAMAP" id="MF_01323">
    <property type="entry name" value="RNApol_bact_RpoC1"/>
    <property type="match status" value="1"/>
</dbReference>
<dbReference type="InterPro" id="IPR045867">
    <property type="entry name" value="DNA-dir_RpoC_beta_prime"/>
</dbReference>
<dbReference type="InterPro" id="IPR000722">
    <property type="entry name" value="RNA_pol_asu"/>
</dbReference>
<dbReference type="InterPro" id="IPR006592">
    <property type="entry name" value="RNA_pol_N"/>
</dbReference>
<dbReference type="InterPro" id="IPR007080">
    <property type="entry name" value="RNA_pol_Rpb1_1"/>
</dbReference>
<dbReference type="InterPro" id="IPR042102">
    <property type="entry name" value="RNA_pol_Rpb1_3_sf"/>
</dbReference>
<dbReference type="InterPro" id="IPR044893">
    <property type="entry name" value="RNA_pol_Rpb1_clamp_domain"/>
</dbReference>
<dbReference type="InterPro" id="IPR034678">
    <property type="entry name" value="RNApol_RpoC1"/>
</dbReference>
<dbReference type="PANTHER" id="PTHR19376">
    <property type="entry name" value="DNA-DIRECTED RNA POLYMERASE"/>
    <property type="match status" value="1"/>
</dbReference>
<dbReference type="PANTHER" id="PTHR19376:SF54">
    <property type="entry name" value="DNA-DIRECTED RNA POLYMERASE SUBUNIT BETA"/>
    <property type="match status" value="1"/>
</dbReference>
<dbReference type="Pfam" id="PF04997">
    <property type="entry name" value="RNA_pol_Rpb1_1"/>
    <property type="match status" value="1"/>
</dbReference>
<dbReference type="Pfam" id="PF00623">
    <property type="entry name" value="RNA_pol_Rpb1_2"/>
    <property type="match status" value="1"/>
</dbReference>
<dbReference type="SMART" id="SM00663">
    <property type="entry name" value="RPOLA_N"/>
    <property type="match status" value="1"/>
</dbReference>
<dbReference type="SUPFAM" id="SSF64484">
    <property type="entry name" value="beta and beta-prime subunits of DNA dependent RNA-polymerase"/>
    <property type="match status" value="1"/>
</dbReference>
<comment type="function">
    <text evidence="1">DNA-dependent RNA polymerase catalyzes the transcription of DNA into RNA using the four ribonucleoside triphosphates as substrates.</text>
</comment>
<comment type="catalytic activity">
    <reaction evidence="1">
        <text>RNA(n) + a ribonucleoside 5'-triphosphate = RNA(n+1) + diphosphate</text>
        <dbReference type="Rhea" id="RHEA:21248"/>
        <dbReference type="Rhea" id="RHEA-COMP:14527"/>
        <dbReference type="Rhea" id="RHEA-COMP:17342"/>
        <dbReference type="ChEBI" id="CHEBI:33019"/>
        <dbReference type="ChEBI" id="CHEBI:61557"/>
        <dbReference type="ChEBI" id="CHEBI:140395"/>
        <dbReference type="EC" id="2.7.7.6"/>
    </reaction>
</comment>
<comment type="cofactor">
    <cofactor evidence="1">
        <name>Mg(2+)</name>
        <dbReference type="ChEBI" id="CHEBI:18420"/>
    </cofactor>
    <text evidence="1">Binds 1 Mg(2+) ion per subunit.</text>
</comment>
<comment type="cofactor">
    <cofactor evidence="1">
        <name>Zn(2+)</name>
        <dbReference type="ChEBI" id="CHEBI:29105"/>
    </cofactor>
    <text evidence="1">Binds 1 Zn(2+) ion per subunit.</text>
</comment>
<comment type="subunit">
    <text evidence="1">In plastids the minimal PEP RNA polymerase catalytic core is composed of four subunits: alpha, beta, beta', and beta''. When a (nuclear-encoded) sigma factor is associated with the core the holoenzyme is formed, which can initiate transcription.</text>
</comment>
<comment type="subcellular location">
    <subcellularLocation>
        <location evidence="1">Plastid</location>
        <location evidence="1">Chloroplast</location>
    </subcellularLocation>
</comment>
<comment type="similarity">
    <text evidence="1">Belongs to the RNA polymerase beta' chain family. RpoC1 subfamily.</text>
</comment>
<organism>
    <name type="scientific">Dioscorea elephantipes</name>
    <name type="common">Elephant's foot yam</name>
    <name type="synonym">Testudinaria elephantipes</name>
    <dbReference type="NCBI Taxonomy" id="145284"/>
    <lineage>
        <taxon>Eukaryota</taxon>
        <taxon>Viridiplantae</taxon>
        <taxon>Streptophyta</taxon>
        <taxon>Embryophyta</taxon>
        <taxon>Tracheophyta</taxon>
        <taxon>Spermatophyta</taxon>
        <taxon>Magnoliopsida</taxon>
        <taxon>Liliopsida</taxon>
        <taxon>Dioscoreales</taxon>
        <taxon>Dioscoreaceae</taxon>
        <taxon>Dioscorea</taxon>
    </lineage>
</organism>
<accession>A6MMJ8</accession>
<geneLocation type="chloroplast"/>
<name>RPOC1_DIOEL</name>
<keyword id="KW-0150">Chloroplast</keyword>
<keyword id="KW-0240">DNA-directed RNA polymerase</keyword>
<keyword id="KW-0460">Magnesium</keyword>
<keyword id="KW-0479">Metal-binding</keyword>
<keyword id="KW-0548">Nucleotidyltransferase</keyword>
<keyword id="KW-0934">Plastid</keyword>
<keyword id="KW-0804">Transcription</keyword>
<keyword id="KW-0808">Transferase</keyword>
<keyword id="KW-0862">Zinc</keyword>
<evidence type="ECO:0000255" key="1">
    <source>
        <dbReference type="HAMAP-Rule" id="MF_01323"/>
    </source>
</evidence>
<feature type="chain" id="PRO_0000353487" description="DNA-directed RNA polymerase subunit beta'">
    <location>
        <begin position="1"/>
        <end position="685"/>
    </location>
</feature>
<feature type="binding site" evidence="1">
    <location>
        <position position="69"/>
    </location>
    <ligand>
        <name>Zn(2+)</name>
        <dbReference type="ChEBI" id="CHEBI:29105"/>
    </ligand>
</feature>
<feature type="binding site" evidence="1">
    <location>
        <position position="71"/>
    </location>
    <ligand>
        <name>Zn(2+)</name>
        <dbReference type="ChEBI" id="CHEBI:29105"/>
    </ligand>
</feature>
<feature type="binding site" evidence="1">
    <location>
        <position position="87"/>
    </location>
    <ligand>
        <name>Zn(2+)</name>
        <dbReference type="ChEBI" id="CHEBI:29105"/>
    </ligand>
</feature>
<feature type="binding site" evidence="1">
    <location>
        <position position="90"/>
    </location>
    <ligand>
        <name>Zn(2+)</name>
        <dbReference type="ChEBI" id="CHEBI:29105"/>
    </ligand>
</feature>
<feature type="binding site" evidence="1">
    <location>
        <position position="492"/>
    </location>
    <ligand>
        <name>Mg(2+)</name>
        <dbReference type="ChEBI" id="CHEBI:18420"/>
    </ligand>
</feature>
<feature type="binding site" evidence="1">
    <location>
        <position position="494"/>
    </location>
    <ligand>
        <name>Mg(2+)</name>
        <dbReference type="ChEBI" id="CHEBI:18420"/>
    </ligand>
</feature>
<feature type="binding site" evidence="1">
    <location>
        <position position="496"/>
    </location>
    <ligand>
        <name>Mg(2+)</name>
        <dbReference type="ChEBI" id="CHEBI:18420"/>
    </ligand>
</feature>
<sequence length="685" mass="79119">MIDQYKHQQLRIGPVSPQQIRAWANKILPNGEIIGEVTKPYTFHYKTNKPEKDGLFCERISGPIKSGICACGNYRVIGAEKEDPKFCEQCGVEFVDSRIRRYQMGYIKLACPATHVWYLKRLPSYIANLLDKPLKELEGLVYCDVFSFARPISKKPTFLRLRGSFEYEIQSWKYSIPLFFTNQSFETFRNREISTGAGAIREQLADSDLQIILNNSLVEWKELGDEEVIGTGNEWEDRKIRRRKDFLVKRMELAKHFIRTNVEPKRMVLCLLPVLPPELRPIIQIDGGKLMSSDINELYRRVIYRNNTLTDLLATSRSMPGELVMCQEKLVQEAVDTLLDNGIRGQPMKDGHNKVYKSFSDVIEGKEGRFRETLLGKRVDYSGRSVIVVGPSLSLHQCGLPREIAIELFQTFLIHGLIKQHVASNIGIAKSKIREKEPIVWEILQEVMRGHPILLNRAPTLHRLGIQAFQPILVEERAICLHPLVCRGFNADFDGDQMAVHVPLSLEAQAEARLLMFSHMNLLSPAIGDPISVPTQDMLIGLYVLTIGNRRGICANRYNTYNCRNSQNKILNNNKYNYIKMKATYCCSSYDALGAYRQKRIDLDSPLWLRWRLDQRVIGSREVPIEIQYESLGTYHEIYRHYLIVRSVKKKIRWIYIRTTIGHISFYREIEEAVQGFCWAYSYVI</sequence>
<protein>
    <recommendedName>
        <fullName evidence="1">DNA-directed RNA polymerase subunit beta'</fullName>
        <ecNumber evidence="1">2.7.7.6</ecNumber>
    </recommendedName>
    <alternativeName>
        <fullName evidence="1">PEP</fullName>
    </alternativeName>
    <alternativeName>
        <fullName evidence="1">Plastid-encoded RNA polymerase subunit beta'</fullName>
        <shortName evidence="1">RNA polymerase subunit beta'</shortName>
    </alternativeName>
</protein>
<proteinExistence type="inferred from homology"/>
<gene>
    <name evidence="1" type="primary">rpoC1</name>
</gene>